<sequence length="84" mass="9655">MDNNVDTITLTDEEGKETEFEVITKLDIEDKEYVVVVPKNEEVDEAIALRIDNNDDGEEVLVPVEEDEEFNMVAEAYELLFSEE</sequence>
<feature type="chain" id="PRO_1000200974" description="UPF0473 protein CLD_2004">
    <location>
        <begin position="1"/>
        <end position="84"/>
    </location>
</feature>
<reference key="1">
    <citation type="journal article" date="2007" name="PLoS ONE">
        <title>Analysis of the neurotoxin complex genes in Clostridium botulinum A1-A4 and B1 strains: BoNT/A3, /Ba4 and /B1 clusters are located within plasmids.</title>
        <authorList>
            <person name="Smith T.J."/>
            <person name="Hill K.K."/>
            <person name="Foley B.T."/>
            <person name="Detter J.C."/>
            <person name="Munk A.C."/>
            <person name="Bruce D.C."/>
            <person name="Doggett N.A."/>
            <person name="Smith L.A."/>
            <person name="Marks J.D."/>
            <person name="Xie G."/>
            <person name="Brettin T.S."/>
        </authorList>
    </citation>
    <scope>NUCLEOTIDE SEQUENCE [LARGE SCALE GENOMIC DNA]</scope>
    <source>
        <strain>Okra / Type B1</strain>
    </source>
</reference>
<accession>B1IJG4</accession>
<name>Y2004_CLOBK</name>
<comment type="similarity">
    <text evidence="1">Belongs to the UPF0473 family.</text>
</comment>
<gene>
    <name type="ordered locus">CLD_2004</name>
</gene>
<evidence type="ECO:0000255" key="1">
    <source>
        <dbReference type="HAMAP-Rule" id="MF_01448"/>
    </source>
</evidence>
<protein>
    <recommendedName>
        <fullName evidence="1">UPF0473 protein CLD_2004</fullName>
    </recommendedName>
</protein>
<proteinExistence type="inferred from homology"/>
<organism>
    <name type="scientific">Clostridium botulinum (strain Okra / Type B1)</name>
    <dbReference type="NCBI Taxonomy" id="498213"/>
    <lineage>
        <taxon>Bacteria</taxon>
        <taxon>Bacillati</taxon>
        <taxon>Bacillota</taxon>
        <taxon>Clostridia</taxon>
        <taxon>Eubacteriales</taxon>
        <taxon>Clostridiaceae</taxon>
        <taxon>Clostridium</taxon>
    </lineage>
</organism>
<dbReference type="EMBL" id="CP000939">
    <property type="protein sequence ID" value="ACA46418.1"/>
    <property type="molecule type" value="Genomic_DNA"/>
</dbReference>
<dbReference type="RefSeq" id="WP_004452069.1">
    <property type="nucleotide sequence ID" value="NC_010516.1"/>
</dbReference>
<dbReference type="SMR" id="B1IJG4"/>
<dbReference type="KEGG" id="cbb:CLD_2004"/>
<dbReference type="HOGENOM" id="CLU_146610_8_0_9"/>
<dbReference type="Proteomes" id="UP000008541">
    <property type="component" value="Chromosome"/>
</dbReference>
<dbReference type="HAMAP" id="MF_01448">
    <property type="entry name" value="UPF0473"/>
    <property type="match status" value="1"/>
</dbReference>
<dbReference type="InterPro" id="IPR009711">
    <property type="entry name" value="UPF0473"/>
</dbReference>
<dbReference type="PANTHER" id="PTHR40066">
    <property type="entry name" value="UPF0473 PROTEIN CBO2561/CLC_2432"/>
    <property type="match status" value="1"/>
</dbReference>
<dbReference type="PANTHER" id="PTHR40066:SF1">
    <property type="entry name" value="UPF0473 PROTEIN CBO2561_CLC_2432"/>
    <property type="match status" value="1"/>
</dbReference>
<dbReference type="Pfam" id="PF06949">
    <property type="entry name" value="DUF1292"/>
    <property type="match status" value="1"/>
</dbReference>